<evidence type="ECO:0000255" key="1">
    <source>
        <dbReference type="HAMAP-Rule" id="MF_00186"/>
    </source>
</evidence>
<name>GLPK_AFIC5</name>
<dbReference type="EC" id="2.7.1.30" evidence="1"/>
<dbReference type="EMBL" id="CP001196">
    <property type="protein sequence ID" value="ACI94544.1"/>
    <property type="molecule type" value="Genomic_DNA"/>
</dbReference>
<dbReference type="EMBL" id="CP002826">
    <property type="protein sequence ID" value="AEI05414.1"/>
    <property type="molecule type" value="Genomic_DNA"/>
</dbReference>
<dbReference type="RefSeq" id="WP_012564569.1">
    <property type="nucleotide sequence ID" value="NC_015684.1"/>
</dbReference>
<dbReference type="SMR" id="B6JJF0"/>
<dbReference type="STRING" id="504832.OCA5_c06910"/>
<dbReference type="KEGG" id="oca:OCAR_7441"/>
<dbReference type="KEGG" id="ocg:OCA5_c06910"/>
<dbReference type="PATRIC" id="fig|504832.7.peg.723"/>
<dbReference type="eggNOG" id="COG0554">
    <property type="taxonomic scope" value="Bacteria"/>
</dbReference>
<dbReference type="HOGENOM" id="CLU_009281_2_3_5"/>
<dbReference type="OrthoDB" id="9805576at2"/>
<dbReference type="UniPathway" id="UPA00618">
    <property type="reaction ID" value="UER00672"/>
</dbReference>
<dbReference type="Proteomes" id="UP000007730">
    <property type="component" value="Chromosome"/>
</dbReference>
<dbReference type="GO" id="GO:0005829">
    <property type="term" value="C:cytosol"/>
    <property type="evidence" value="ECO:0007669"/>
    <property type="project" value="TreeGrafter"/>
</dbReference>
<dbReference type="GO" id="GO:0005524">
    <property type="term" value="F:ATP binding"/>
    <property type="evidence" value="ECO:0007669"/>
    <property type="project" value="UniProtKB-UniRule"/>
</dbReference>
<dbReference type="GO" id="GO:0004370">
    <property type="term" value="F:glycerol kinase activity"/>
    <property type="evidence" value="ECO:0000250"/>
    <property type="project" value="UniProtKB"/>
</dbReference>
<dbReference type="GO" id="GO:0019563">
    <property type="term" value="P:glycerol catabolic process"/>
    <property type="evidence" value="ECO:0007669"/>
    <property type="project" value="UniProtKB-UniRule"/>
</dbReference>
<dbReference type="GO" id="GO:0006071">
    <property type="term" value="P:glycerol metabolic process"/>
    <property type="evidence" value="ECO:0000250"/>
    <property type="project" value="UniProtKB"/>
</dbReference>
<dbReference type="GO" id="GO:0006072">
    <property type="term" value="P:glycerol-3-phosphate metabolic process"/>
    <property type="evidence" value="ECO:0007669"/>
    <property type="project" value="InterPro"/>
</dbReference>
<dbReference type="CDD" id="cd07786">
    <property type="entry name" value="FGGY_EcGK_like"/>
    <property type="match status" value="1"/>
</dbReference>
<dbReference type="FunFam" id="3.30.420.40:FF:000007">
    <property type="entry name" value="Glycerol kinase"/>
    <property type="match status" value="1"/>
</dbReference>
<dbReference type="FunFam" id="3.30.420.40:FF:000008">
    <property type="entry name" value="Glycerol kinase"/>
    <property type="match status" value="1"/>
</dbReference>
<dbReference type="Gene3D" id="3.30.420.40">
    <property type="match status" value="2"/>
</dbReference>
<dbReference type="HAMAP" id="MF_00186">
    <property type="entry name" value="Glycerol_kin"/>
    <property type="match status" value="1"/>
</dbReference>
<dbReference type="InterPro" id="IPR043129">
    <property type="entry name" value="ATPase_NBD"/>
</dbReference>
<dbReference type="InterPro" id="IPR000577">
    <property type="entry name" value="Carb_kinase_FGGY"/>
</dbReference>
<dbReference type="InterPro" id="IPR018483">
    <property type="entry name" value="Carb_kinase_FGGY_CS"/>
</dbReference>
<dbReference type="InterPro" id="IPR018485">
    <property type="entry name" value="FGGY_C"/>
</dbReference>
<dbReference type="InterPro" id="IPR018484">
    <property type="entry name" value="FGGY_N"/>
</dbReference>
<dbReference type="InterPro" id="IPR005999">
    <property type="entry name" value="Glycerol_kin"/>
</dbReference>
<dbReference type="NCBIfam" id="TIGR01311">
    <property type="entry name" value="glycerol_kin"/>
    <property type="match status" value="1"/>
</dbReference>
<dbReference type="NCBIfam" id="NF000756">
    <property type="entry name" value="PRK00047.1"/>
    <property type="match status" value="1"/>
</dbReference>
<dbReference type="PANTHER" id="PTHR10196:SF78">
    <property type="entry name" value="GLYCEROL KINASE"/>
    <property type="match status" value="1"/>
</dbReference>
<dbReference type="PANTHER" id="PTHR10196">
    <property type="entry name" value="SUGAR KINASE"/>
    <property type="match status" value="1"/>
</dbReference>
<dbReference type="Pfam" id="PF02782">
    <property type="entry name" value="FGGY_C"/>
    <property type="match status" value="1"/>
</dbReference>
<dbReference type="Pfam" id="PF00370">
    <property type="entry name" value="FGGY_N"/>
    <property type="match status" value="1"/>
</dbReference>
<dbReference type="PIRSF" id="PIRSF000538">
    <property type="entry name" value="GlpK"/>
    <property type="match status" value="1"/>
</dbReference>
<dbReference type="SUPFAM" id="SSF53067">
    <property type="entry name" value="Actin-like ATPase domain"/>
    <property type="match status" value="2"/>
</dbReference>
<dbReference type="PROSITE" id="PS00445">
    <property type="entry name" value="FGGY_KINASES_2"/>
    <property type="match status" value="1"/>
</dbReference>
<organism>
    <name type="scientific">Afipia carboxidovorans (strain ATCC 49405 / DSM 1227 / KCTC 32145 / OM5)</name>
    <name type="common">Oligotropha carboxidovorans</name>
    <dbReference type="NCBI Taxonomy" id="504832"/>
    <lineage>
        <taxon>Bacteria</taxon>
        <taxon>Pseudomonadati</taxon>
        <taxon>Pseudomonadota</taxon>
        <taxon>Alphaproteobacteria</taxon>
        <taxon>Hyphomicrobiales</taxon>
        <taxon>Nitrobacteraceae</taxon>
        <taxon>Afipia</taxon>
    </lineage>
</organism>
<proteinExistence type="inferred from homology"/>
<accession>B6JJF0</accession>
<accession>F8BXZ4</accession>
<comment type="function">
    <text evidence="1">Key enzyme in the regulation of glycerol uptake and metabolism. Catalyzes the phosphorylation of glycerol to yield sn-glycerol 3-phosphate.</text>
</comment>
<comment type="catalytic activity">
    <reaction evidence="1">
        <text>glycerol + ATP = sn-glycerol 3-phosphate + ADP + H(+)</text>
        <dbReference type="Rhea" id="RHEA:21644"/>
        <dbReference type="ChEBI" id="CHEBI:15378"/>
        <dbReference type="ChEBI" id="CHEBI:17754"/>
        <dbReference type="ChEBI" id="CHEBI:30616"/>
        <dbReference type="ChEBI" id="CHEBI:57597"/>
        <dbReference type="ChEBI" id="CHEBI:456216"/>
        <dbReference type="EC" id="2.7.1.30"/>
    </reaction>
</comment>
<comment type="activity regulation">
    <text evidence="1">Inhibited by fructose 1,6-bisphosphate (FBP).</text>
</comment>
<comment type="pathway">
    <text evidence="1">Polyol metabolism; glycerol degradation via glycerol kinase pathway; sn-glycerol 3-phosphate from glycerol: step 1/1.</text>
</comment>
<comment type="similarity">
    <text evidence="1">Belongs to the FGGY kinase family.</text>
</comment>
<keyword id="KW-0067">ATP-binding</keyword>
<keyword id="KW-0319">Glycerol metabolism</keyword>
<keyword id="KW-0418">Kinase</keyword>
<keyword id="KW-0547">Nucleotide-binding</keyword>
<keyword id="KW-1185">Reference proteome</keyword>
<keyword id="KW-0808">Transferase</keyword>
<feature type="chain" id="PRO_1000098747" description="Glycerol kinase">
    <location>
        <begin position="1"/>
        <end position="498"/>
    </location>
</feature>
<feature type="binding site" evidence="1">
    <location>
        <position position="11"/>
    </location>
    <ligand>
        <name>ADP</name>
        <dbReference type="ChEBI" id="CHEBI:456216"/>
    </ligand>
</feature>
<feature type="binding site" evidence="1">
    <location>
        <position position="11"/>
    </location>
    <ligand>
        <name>ATP</name>
        <dbReference type="ChEBI" id="CHEBI:30616"/>
    </ligand>
</feature>
<feature type="binding site" evidence="1">
    <location>
        <position position="11"/>
    </location>
    <ligand>
        <name>sn-glycerol 3-phosphate</name>
        <dbReference type="ChEBI" id="CHEBI:57597"/>
    </ligand>
</feature>
<feature type="binding site" evidence="1">
    <location>
        <position position="12"/>
    </location>
    <ligand>
        <name>ATP</name>
        <dbReference type="ChEBI" id="CHEBI:30616"/>
    </ligand>
</feature>
<feature type="binding site" evidence="1">
    <location>
        <position position="13"/>
    </location>
    <ligand>
        <name>ATP</name>
        <dbReference type="ChEBI" id="CHEBI:30616"/>
    </ligand>
</feature>
<feature type="binding site" evidence="1">
    <location>
        <position position="15"/>
    </location>
    <ligand>
        <name>ADP</name>
        <dbReference type="ChEBI" id="CHEBI:456216"/>
    </ligand>
</feature>
<feature type="binding site" evidence="1">
    <location>
        <position position="81"/>
    </location>
    <ligand>
        <name>glycerol</name>
        <dbReference type="ChEBI" id="CHEBI:17754"/>
    </ligand>
</feature>
<feature type="binding site" evidence="1">
    <location>
        <position position="81"/>
    </location>
    <ligand>
        <name>sn-glycerol 3-phosphate</name>
        <dbReference type="ChEBI" id="CHEBI:57597"/>
    </ligand>
</feature>
<feature type="binding site" evidence="1">
    <location>
        <position position="82"/>
    </location>
    <ligand>
        <name>glycerol</name>
        <dbReference type="ChEBI" id="CHEBI:17754"/>
    </ligand>
</feature>
<feature type="binding site" evidence="1">
    <location>
        <position position="82"/>
    </location>
    <ligand>
        <name>sn-glycerol 3-phosphate</name>
        <dbReference type="ChEBI" id="CHEBI:57597"/>
    </ligand>
</feature>
<feature type="binding site" evidence="1">
    <location>
        <position position="133"/>
    </location>
    <ligand>
        <name>glycerol</name>
        <dbReference type="ChEBI" id="CHEBI:17754"/>
    </ligand>
</feature>
<feature type="binding site" evidence="1">
    <location>
        <position position="133"/>
    </location>
    <ligand>
        <name>sn-glycerol 3-phosphate</name>
        <dbReference type="ChEBI" id="CHEBI:57597"/>
    </ligand>
</feature>
<feature type="binding site" evidence="1">
    <location>
        <position position="242"/>
    </location>
    <ligand>
        <name>glycerol</name>
        <dbReference type="ChEBI" id="CHEBI:17754"/>
    </ligand>
</feature>
<feature type="binding site" evidence="1">
    <location>
        <position position="242"/>
    </location>
    <ligand>
        <name>sn-glycerol 3-phosphate</name>
        <dbReference type="ChEBI" id="CHEBI:57597"/>
    </ligand>
</feature>
<feature type="binding site" evidence="1">
    <location>
        <position position="243"/>
    </location>
    <ligand>
        <name>glycerol</name>
        <dbReference type="ChEBI" id="CHEBI:17754"/>
    </ligand>
</feature>
<feature type="binding site" evidence="1">
    <location>
        <position position="264"/>
    </location>
    <ligand>
        <name>ADP</name>
        <dbReference type="ChEBI" id="CHEBI:456216"/>
    </ligand>
</feature>
<feature type="binding site" evidence="1">
    <location>
        <position position="264"/>
    </location>
    <ligand>
        <name>ATP</name>
        <dbReference type="ChEBI" id="CHEBI:30616"/>
    </ligand>
</feature>
<feature type="binding site" evidence="1">
    <location>
        <position position="307"/>
    </location>
    <ligand>
        <name>ADP</name>
        <dbReference type="ChEBI" id="CHEBI:456216"/>
    </ligand>
</feature>
<feature type="binding site" evidence="1">
    <location>
        <position position="307"/>
    </location>
    <ligand>
        <name>ATP</name>
        <dbReference type="ChEBI" id="CHEBI:30616"/>
    </ligand>
</feature>
<feature type="binding site" evidence="1">
    <location>
        <position position="311"/>
    </location>
    <ligand>
        <name>ATP</name>
        <dbReference type="ChEBI" id="CHEBI:30616"/>
    </ligand>
</feature>
<feature type="binding site" evidence="1">
    <location>
        <position position="411"/>
    </location>
    <ligand>
        <name>ADP</name>
        <dbReference type="ChEBI" id="CHEBI:456216"/>
    </ligand>
</feature>
<feature type="binding site" evidence="1">
    <location>
        <position position="411"/>
    </location>
    <ligand>
        <name>ATP</name>
        <dbReference type="ChEBI" id="CHEBI:30616"/>
    </ligand>
</feature>
<sequence length="498" mass="53727">MTYLLAIDQGTTSSRAMLFREDLSVAAQAQQEVPQHFPASGWVEHDPEDIWATTLATCRAAMEKGGVTAREIAAIGISNQRETTVVWERASGKAIHRAIVWQDRRTADVCARLQADGHEPLIATRTGLIADPYFSGTKIAWILDAVPGARARAERGELLFGTVDCYLLWRLTGGAVHATDATNASRTLLFDIYAGAWDDDLLRLLRVPRAMLPRVRDCAAEFGTTLPDLLGGPIAVRGIAGDQQAATVGQACFAPGMMKSTYGTGCFALLNTGATAVASKNKLLTTIAYQLNGVRTYALEGSIFVAGSAVQWLRDGLHLIKTAHDSDDLAPLADATQAVYLVPAFVGLGAPYWNPRVRGALFGLTRNTGPAEFAQAALESVCYQTHDLWTAMRADWPDGVTQNAALRVDGGMAVSDWTMQRLADILNVTVDRPVIPETTALGAAYLAGLASGICPPPAEFAARWQLDRRFTPEMDEETRARKLTGWTRAVKGLLASED</sequence>
<gene>
    <name evidence="1" type="primary">glpK</name>
    <name type="ordered locus">OCAR_7441</name>
    <name type="ordered locus">OCA5_c06910</name>
</gene>
<reference key="1">
    <citation type="journal article" date="2008" name="J. Bacteriol.">
        <title>Genome sequence of the chemolithoautotrophic bacterium Oligotropha carboxidovorans OM5T.</title>
        <authorList>
            <person name="Paul D."/>
            <person name="Bridges S."/>
            <person name="Burgess S.C."/>
            <person name="Dandass Y."/>
            <person name="Lawrence M.L."/>
        </authorList>
    </citation>
    <scope>NUCLEOTIDE SEQUENCE [LARGE SCALE GENOMIC DNA]</scope>
    <source>
        <strain>ATCC 49405 / DSM 1227 / KCTC 32145 / OM5</strain>
    </source>
</reference>
<reference key="2">
    <citation type="journal article" date="2011" name="J. Bacteriol.">
        <title>Complete genome sequences of the chemolithoautotrophic Oligotropha carboxidovorans strains OM4 and OM5.</title>
        <authorList>
            <person name="Volland S."/>
            <person name="Rachinger M."/>
            <person name="Strittmatter A."/>
            <person name="Daniel R."/>
            <person name="Gottschalk G."/>
            <person name="Meyer O."/>
        </authorList>
    </citation>
    <scope>NUCLEOTIDE SEQUENCE [LARGE SCALE GENOMIC DNA]</scope>
    <source>
        <strain>ATCC 49405 / DSM 1227 / KCTC 32145 / OM5</strain>
    </source>
</reference>
<protein>
    <recommendedName>
        <fullName evidence="1">Glycerol kinase</fullName>
        <ecNumber evidence="1">2.7.1.30</ecNumber>
    </recommendedName>
    <alternativeName>
        <fullName evidence="1">ATP:glycerol 3-phosphotransferase</fullName>
    </alternativeName>
    <alternativeName>
        <fullName evidence="1">Glycerokinase</fullName>
        <shortName evidence="1">GK</shortName>
    </alternativeName>
</protein>